<accession>Q6GH02</accession>
<comment type="similarity">
    <text evidence="1">Belongs to the TelA family.</text>
</comment>
<sequence length="378" mass="43407">MTENKSFKESHPLDDFISDKELSNTTIQKEKLTIEQQKQVDTISKQINPLDNEGLLAFGSDLQKQMSQFSHQMLDEVQSKDVGPIGDTLSDLMSKLKSVNPNELNTDKPSMLKRIFSRAKSSINEIFSRMQSVSAQVDRITIQLQKHQTHLTRDIELLDTLYDKNKQYFDDLSLHIIAAQQKKLQLENEKLPQLQQQAQQSTNQMDIQQVADMQQFIDRLDKRIYDLQLSRQIALQTAPQIRMIQNVNQALAEKIQSSILTSIPLWKNQMAIALTLMRQRNAVAAQRAVTDTTNDLLTANAEMLKQNAIETATENERGIVDLDTLKRTQRNIIETIEETLIIQQHGREERQLAEKELQQLEQDLKSHLVNIKGPNKQS</sequence>
<dbReference type="EMBL" id="BX571856">
    <property type="protein sequence ID" value="CAG40415.1"/>
    <property type="molecule type" value="Genomic_DNA"/>
</dbReference>
<dbReference type="RefSeq" id="WP_000138413.1">
    <property type="nucleotide sequence ID" value="NC_002952.2"/>
</dbReference>
<dbReference type="SMR" id="Q6GH02"/>
<dbReference type="KEGG" id="sar:SAR1418"/>
<dbReference type="HOGENOM" id="CLU_032111_0_0_9"/>
<dbReference type="Proteomes" id="UP000000596">
    <property type="component" value="Chromosome"/>
</dbReference>
<dbReference type="InterPro" id="IPR008863">
    <property type="entry name" value="Toxic_anion-R_TelA"/>
</dbReference>
<dbReference type="PANTHER" id="PTHR38432">
    <property type="entry name" value="TELA-LIKE PROTEIN SAOUHSC_01408"/>
    <property type="match status" value="1"/>
</dbReference>
<dbReference type="PANTHER" id="PTHR38432:SF1">
    <property type="entry name" value="TELA-LIKE PROTEIN SAOUHSC_01408"/>
    <property type="match status" value="1"/>
</dbReference>
<dbReference type="Pfam" id="PF05816">
    <property type="entry name" value="TelA"/>
    <property type="match status" value="1"/>
</dbReference>
<dbReference type="PIRSF" id="PIRSF026508">
    <property type="entry name" value="TelA"/>
    <property type="match status" value="1"/>
</dbReference>
<name>TELL_STAAR</name>
<organism>
    <name type="scientific">Staphylococcus aureus (strain MRSA252)</name>
    <dbReference type="NCBI Taxonomy" id="282458"/>
    <lineage>
        <taxon>Bacteria</taxon>
        <taxon>Bacillati</taxon>
        <taxon>Bacillota</taxon>
        <taxon>Bacilli</taxon>
        <taxon>Bacillales</taxon>
        <taxon>Staphylococcaceae</taxon>
        <taxon>Staphylococcus</taxon>
    </lineage>
</organism>
<reference key="1">
    <citation type="journal article" date="2004" name="Proc. Natl. Acad. Sci. U.S.A.">
        <title>Complete genomes of two clinical Staphylococcus aureus strains: evidence for the rapid evolution of virulence and drug resistance.</title>
        <authorList>
            <person name="Holden M.T.G."/>
            <person name="Feil E.J."/>
            <person name="Lindsay J.A."/>
            <person name="Peacock S.J."/>
            <person name="Day N.P.J."/>
            <person name="Enright M.C."/>
            <person name="Foster T.J."/>
            <person name="Moore C.E."/>
            <person name="Hurst L."/>
            <person name="Atkin R."/>
            <person name="Barron A."/>
            <person name="Bason N."/>
            <person name="Bentley S.D."/>
            <person name="Chillingworth C."/>
            <person name="Chillingworth T."/>
            <person name="Churcher C."/>
            <person name="Clark L."/>
            <person name="Corton C."/>
            <person name="Cronin A."/>
            <person name="Doggett J."/>
            <person name="Dowd L."/>
            <person name="Feltwell T."/>
            <person name="Hance Z."/>
            <person name="Harris B."/>
            <person name="Hauser H."/>
            <person name="Holroyd S."/>
            <person name="Jagels K."/>
            <person name="James K.D."/>
            <person name="Lennard N."/>
            <person name="Line A."/>
            <person name="Mayes R."/>
            <person name="Moule S."/>
            <person name="Mungall K."/>
            <person name="Ormond D."/>
            <person name="Quail M.A."/>
            <person name="Rabbinowitsch E."/>
            <person name="Rutherford K.M."/>
            <person name="Sanders M."/>
            <person name="Sharp S."/>
            <person name="Simmonds M."/>
            <person name="Stevens K."/>
            <person name="Whitehead S."/>
            <person name="Barrell B.G."/>
            <person name="Spratt B.G."/>
            <person name="Parkhill J."/>
        </authorList>
    </citation>
    <scope>NUCLEOTIDE SEQUENCE [LARGE SCALE GENOMIC DNA]</scope>
    <source>
        <strain>MRSA252</strain>
    </source>
</reference>
<proteinExistence type="inferred from homology"/>
<protein>
    <recommendedName>
        <fullName>TelA-like protein SAR1418</fullName>
    </recommendedName>
</protein>
<gene>
    <name type="ordered locus">SAR1418</name>
</gene>
<evidence type="ECO:0000305" key="1"/>
<feature type="chain" id="PRO_0000172805" description="TelA-like protein SAR1418">
    <location>
        <begin position="1"/>
        <end position="378"/>
    </location>
</feature>